<organism>
    <name type="scientific">Trichoplax adhaerens</name>
    <name type="common">Trichoplax reptans</name>
    <dbReference type="NCBI Taxonomy" id="10228"/>
    <lineage>
        <taxon>Eukaryota</taxon>
        <taxon>Metazoa</taxon>
        <taxon>Placozoa</taxon>
        <taxon>Uniplacotomia</taxon>
        <taxon>Trichoplacea</taxon>
        <taxon>Trichoplacidae</taxon>
        <taxon>Trichoplax</taxon>
    </lineage>
</organism>
<sequence>MEFDFDISQSLPDFITKVDNTLNPFNRQLDVTSRKRLQQNLIVIIDRMGMASAKARLLRRLTAQSLKGAITTAAKLGISDHRLYILKETEVNRGLGKVVGILKVGKKKLFVVDYTGAQHECLPLCVLDFYVHESQQRTGNGKLLFEYMLKAENVTPSHLAIDRPSFKFLSFLQKHYGLRDTLPKQVNNFVVFEDLFNLIRKKKSGGITQHQPTSLKPPIPPTGRRCMHFLNLTIWQTR</sequence>
<evidence type="ECO:0000255" key="1">
    <source>
        <dbReference type="HAMAP-Rule" id="MF_03130"/>
    </source>
</evidence>
<feature type="chain" id="PRO_0000402090" description="Alpha-tubulin N-acetyltransferase">
    <location>
        <begin position="1"/>
        <end position="238"/>
    </location>
</feature>
<feature type="domain" description="N-acetyltransferase" evidence="1">
    <location>
        <begin position="1"/>
        <end position="196"/>
    </location>
</feature>
<feature type="binding site" evidence="1">
    <location>
        <begin position="129"/>
        <end position="142"/>
    </location>
    <ligand>
        <name>acetyl-CoA</name>
        <dbReference type="ChEBI" id="CHEBI:57288"/>
    </ligand>
</feature>
<feature type="binding site" evidence="1">
    <location>
        <begin position="165"/>
        <end position="174"/>
    </location>
    <ligand>
        <name>acetyl-CoA</name>
        <dbReference type="ChEBI" id="CHEBI:57288"/>
    </ligand>
</feature>
<name>ATAT_TRIAD</name>
<accession>B3RNE8</accession>
<keyword id="KW-0012">Acyltransferase</keyword>
<keyword id="KW-1185">Reference proteome</keyword>
<keyword id="KW-0808">Transferase</keyword>
<gene>
    <name type="ORF">TRIADDRAFT_53139</name>
</gene>
<comment type="function">
    <text evidence="1">Specifically acetylates 'Lys-40' in alpha-tubulin on the lumenal side of microtubules. Promotes microtubule destabilization and accelerates microtubule dynamics; this activity may be independent of acetylation activity. Acetylates alpha-tubulin with a slow enzymatic rate, due to a catalytic site that is not optimized for acetyl transfer. Enters the microtubule through each end and diffuses quickly throughout the lumen of microtubules. Acetylates only long/old microtubules because of its slow acetylation rate since it does not have time to act on dynamically unstable microtubules before the enzyme is released.</text>
</comment>
<comment type="catalytic activity">
    <reaction evidence="1">
        <text>L-lysyl-[alpha-tubulin] + acetyl-CoA = N(6)-acetyl-L-lysyl-[alpha-tubulin] + CoA + H(+)</text>
        <dbReference type="Rhea" id="RHEA:15277"/>
        <dbReference type="Rhea" id="RHEA-COMP:11278"/>
        <dbReference type="Rhea" id="RHEA-COMP:11279"/>
        <dbReference type="ChEBI" id="CHEBI:15378"/>
        <dbReference type="ChEBI" id="CHEBI:29969"/>
        <dbReference type="ChEBI" id="CHEBI:57287"/>
        <dbReference type="ChEBI" id="CHEBI:57288"/>
        <dbReference type="ChEBI" id="CHEBI:61930"/>
        <dbReference type="EC" id="2.3.1.108"/>
    </reaction>
</comment>
<comment type="similarity">
    <text evidence="1">Belongs to the acetyltransferase ATAT1 family.</text>
</comment>
<protein>
    <recommendedName>
        <fullName evidence="1">Alpha-tubulin N-acetyltransferase</fullName>
        <shortName evidence="1">Alpha-TAT</shortName>
        <shortName evidence="1">TAT</shortName>
        <ecNumber evidence="1">2.3.1.108</ecNumber>
    </recommendedName>
    <alternativeName>
        <fullName evidence="1">Acetyltransferase mec-17 homolog</fullName>
    </alternativeName>
</protein>
<dbReference type="EC" id="2.3.1.108" evidence="1"/>
<dbReference type="EMBL" id="DS985242">
    <property type="protein sequence ID" value="EDV27440.1"/>
    <property type="molecule type" value="Genomic_DNA"/>
</dbReference>
<dbReference type="RefSeq" id="XP_002109274.1">
    <property type="nucleotide sequence ID" value="XM_002109238.1"/>
</dbReference>
<dbReference type="SMR" id="B3RNE8"/>
<dbReference type="FunCoup" id="B3RNE8">
    <property type="interactions" value="440"/>
</dbReference>
<dbReference type="EnsemblMetazoa" id="TriadT53139">
    <property type="protein sequence ID" value="TriadP53139"/>
    <property type="gene ID" value="TriadG53139"/>
</dbReference>
<dbReference type="GeneID" id="6750489"/>
<dbReference type="KEGG" id="tad:TRIADDRAFT_53139"/>
<dbReference type="CTD" id="6750489"/>
<dbReference type="eggNOG" id="KOG4601">
    <property type="taxonomic scope" value="Eukaryota"/>
</dbReference>
<dbReference type="HOGENOM" id="CLU_025013_2_0_1"/>
<dbReference type="InParanoid" id="B3RNE8"/>
<dbReference type="OMA" id="FFIGRHP"/>
<dbReference type="OrthoDB" id="447510at2759"/>
<dbReference type="PhylomeDB" id="B3RNE8"/>
<dbReference type="Proteomes" id="UP000009022">
    <property type="component" value="Unassembled WGS sequence"/>
</dbReference>
<dbReference type="GO" id="GO:0005874">
    <property type="term" value="C:microtubule"/>
    <property type="evidence" value="ECO:0007669"/>
    <property type="project" value="InterPro"/>
</dbReference>
<dbReference type="GO" id="GO:0019799">
    <property type="term" value="F:tubulin N-acetyltransferase activity"/>
    <property type="evidence" value="ECO:0000318"/>
    <property type="project" value="GO_Central"/>
</dbReference>
<dbReference type="GO" id="GO:0000226">
    <property type="term" value="P:microtubule cytoskeleton organization"/>
    <property type="evidence" value="ECO:0000318"/>
    <property type="project" value="GO_Central"/>
</dbReference>
<dbReference type="GO" id="GO:0070507">
    <property type="term" value="P:regulation of microtubule cytoskeleton organization"/>
    <property type="evidence" value="ECO:0007669"/>
    <property type="project" value="UniProtKB-UniRule"/>
</dbReference>
<dbReference type="FunFam" id="3.40.630.30:FF:000060">
    <property type="entry name" value="Alpha-tubulin N-acetyltransferase 1"/>
    <property type="match status" value="1"/>
</dbReference>
<dbReference type="Gene3D" id="3.40.630.30">
    <property type="match status" value="1"/>
</dbReference>
<dbReference type="HAMAP" id="MF_03130">
    <property type="entry name" value="mec17"/>
    <property type="match status" value="1"/>
</dbReference>
<dbReference type="InterPro" id="IPR038746">
    <property type="entry name" value="Atat"/>
</dbReference>
<dbReference type="InterPro" id="IPR007965">
    <property type="entry name" value="GNAT_ATAT"/>
</dbReference>
<dbReference type="PANTHER" id="PTHR12327">
    <property type="entry name" value="ALPHA-TUBULIN N-ACETYLTRANSFERASE 1"/>
    <property type="match status" value="1"/>
</dbReference>
<dbReference type="PANTHER" id="PTHR12327:SF0">
    <property type="entry name" value="ALPHA-TUBULIN N-ACETYLTRANSFERASE 1"/>
    <property type="match status" value="1"/>
</dbReference>
<dbReference type="Pfam" id="PF05301">
    <property type="entry name" value="Acetyltransf_16"/>
    <property type="match status" value="1"/>
</dbReference>
<dbReference type="PROSITE" id="PS51730">
    <property type="entry name" value="GNAT_ATAT"/>
    <property type="match status" value="1"/>
</dbReference>
<proteinExistence type="inferred from homology"/>
<reference key="1">
    <citation type="journal article" date="2008" name="Nature">
        <title>The Trichoplax genome and the nature of placozoans.</title>
        <authorList>
            <person name="Srivastava M."/>
            <person name="Begovic E."/>
            <person name="Chapman J."/>
            <person name="Putnam N.H."/>
            <person name="Hellsten U."/>
            <person name="Kawashima T."/>
            <person name="Kuo A."/>
            <person name="Mitros T."/>
            <person name="Salamov A."/>
            <person name="Carpenter M.L."/>
            <person name="Signorovitch A.Y."/>
            <person name="Moreno M.A."/>
            <person name="Kamm K."/>
            <person name="Grimwood J."/>
            <person name="Schmutz J."/>
            <person name="Shapiro H."/>
            <person name="Grigoriev I.V."/>
            <person name="Buss L.W."/>
            <person name="Schierwater B."/>
            <person name="Dellaporta S.L."/>
            <person name="Rokhsar D.S."/>
        </authorList>
    </citation>
    <scope>NUCLEOTIDE SEQUENCE [LARGE SCALE GENOMIC DNA]</scope>
    <source>
        <strain>Grell-BS-1999</strain>
    </source>
</reference>